<sequence length="219" mass="23091">MVGASTLAHDVRLQALRLYLVTDQFCAGGRTLADVVAAAVQGGVTCVQLREKQLNTRDFLAQALALKDLLAPHGIPLVINDRIDVALACGAQGVHLGQSDMPVTQARRLLPPEVFIGWSVETLEDVARSAELPVDYLGVSPIFATPTKTDTLPPWGLEGLRQVRRATTVPLVAIGGIHVGNAREVLLAGADGLAVVSALCAAQDPCVAALRLRQLIDAV</sequence>
<comment type="function">
    <text evidence="1">Condenses 4-methyl-5-(beta-hydroxyethyl)thiazole monophosphate (THZ-P) and 2-methyl-4-amino-5-hydroxymethyl pyrimidine pyrophosphate (HMP-PP) to form thiamine monophosphate (TMP).</text>
</comment>
<comment type="catalytic activity">
    <reaction evidence="1">
        <text>2-[(2R,5Z)-2-carboxy-4-methylthiazol-5(2H)-ylidene]ethyl phosphate + 4-amino-2-methyl-5-(diphosphooxymethyl)pyrimidine + 2 H(+) = thiamine phosphate + CO2 + diphosphate</text>
        <dbReference type="Rhea" id="RHEA:47844"/>
        <dbReference type="ChEBI" id="CHEBI:15378"/>
        <dbReference type="ChEBI" id="CHEBI:16526"/>
        <dbReference type="ChEBI" id="CHEBI:33019"/>
        <dbReference type="ChEBI" id="CHEBI:37575"/>
        <dbReference type="ChEBI" id="CHEBI:57841"/>
        <dbReference type="ChEBI" id="CHEBI:62899"/>
        <dbReference type="EC" id="2.5.1.3"/>
    </reaction>
</comment>
<comment type="catalytic activity">
    <reaction evidence="1">
        <text>2-(2-carboxy-4-methylthiazol-5-yl)ethyl phosphate + 4-amino-2-methyl-5-(diphosphooxymethyl)pyrimidine + 2 H(+) = thiamine phosphate + CO2 + diphosphate</text>
        <dbReference type="Rhea" id="RHEA:47848"/>
        <dbReference type="ChEBI" id="CHEBI:15378"/>
        <dbReference type="ChEBI" id="CHEBI:16526"/>
        <dbReference type="ChEBI" id="CHEBI:33019"/>
        <dbReference type="ChEBI" id="CHEBI:37575"/>
        <dbReference type="ChEBI" id="CHEBI:57841"/>
        <dbReference type="ChEBI" id="CHEBI:62890"/>
        <dbReference type="EC" id="2.5.1.3"/>
    </reaction>
</comment>
<comment type="catalytic activity">
    <reaction evidence="1">
        <text>4-methyl-5-(2-phosphooxyethyl)-thiazole + 4-amino-2-methyl-5-(diphosphooxymethyl)pyrimidine + H(+) = thiamine phosphate + diphosphate</text>
        <dbReference type="Rhea" id="RHEA:22328"/>
        <dbReference type="ChEBI" id="CHEBI:15378"/>
        <dbReference type="ChEBI" id="CHEBI:33019"/>
        <dbReference type="ChEBI" id="CHEBI:37575"/>
        <dbReference type="ChEBI" id="CHEBI:57841"/>
        <dbReference type="ChEBI" id="CHEBI:58296"/>
        <dbReference type="EC" id="2.5.1.3"/>
    </reaction>
</comment>
<comment type="cofactor">
    <cofactor evidence="1">
        <name>Mg(2+)</name>
        <dbReference type="ChEBI" id="CHEBI:18420"/>
    </cofactor>
    <text evidence="1">Binds 1 Mg(2+) ion per subunit.</text>
</comment>
<comment type="pathway">
    <text evidence="1">Cofactor biosynthesis; thiamine diphosphate biosynthesis; thiamine phosphate from 4-amino-2-methyl-5-diphosphomethylpyrimidine and 4-methyl-5-(2-phosphoethyl)-thiazole: step 1/1.</text>
</comment>
<comment type="similarity">
    <text evidence="1">Belongs to the thiamine-phosphate synthase family.</text>
</comment>
<proteinExistence type="inferred from homology"/>
<reference key="1">
    <citation type="submission" date="2006-02" db="EMBL/GenBank/DDBJ databases">
        <title>Complete sequence of chromosome of Rhodoferax ferrireducens DSM 15236.</title>
        <authorList>
            <person name="Copeland A."/>
            <person name="Lucas S."/>
            <person name="Lapidus A."/>
            <person name="Barry K."/>
            <person name="Detter J.C."/>
            <person name="Glavina del Rio T."/>
            <person name="Hammon N."/>
            <person name="Israni S."/>
            <person name="Pitluck S."/>
            <person name="Brettin T."/>
            <person name="Bruce D."/>
            <person name="Han C."/>
            <person name="Tapia R."/>
            <person name="Gilna P."/>
            <person name="Kiss H."/>
            <person name="Schmutz J."/>
            <person name="Larimer F."/>
            <person name="Land M."/>
            <person name="Kyrpides N."/>
            <person name="Ivanova N."/>
            <person name="Richardson P."/>
        </authorList>
    </citation>
    <scope>NUCLEOTIDE SEQUENCE [LARGE SCALE GENOMIC DNA]</scope>
    <source>
        <strain>ATCC BAA-621 / DSM 15236 / T118</strain>
    </source>
</reference>
<organism>
    <name type="scientific">Albidiferax ferrireducens (strain ATCC BAA-621 / DSM 15236 / T118)</name>
    <name type="common">Rhodoferax ferrireducens</name>
    <dbReference type="NCBI Taxonomy" id="338969"/>
    <lineage>
        <taxon>Bacteria</taxon>
        <taxon>Pseudomonadati</taxon>
        <taxon>Pseudomonadota</taxon>
        <taxon>Betaproteobacteria</taxon>
        <taxon>Burkholderiales</taxon>
        <taxon>Comamonadaceae</taxon>
        <taxon>Rhodoferax</taxon>
    </lineage>
</organism>
<dbReference type="EC" id="2.5.1.3" evidence="1"/>
<dbReference type="EMBL" id="CP000267">
    <property type="protein sequence ID" value="ABD70188.1"/>
    <property type="molecule type" value="Genomic_DNA"/>
</dbReference>
<dbReference type="RefSeq" id="WP_011464756.1">
    <property type="nucleotide sequence ID" value="NC_007908.1"/>
</dbReference>
<dbReference type="SMR" id="Q21VL5"/>
<dbReference type="STRING" id="338969.Rfer_2471"/>
<dbReference type="KEGG" id="rfr:Rfer_2471"/>
<dbReference type="eggNOG" id="COG0352">
    <property type="taxonomic scope" value="Bacteria"/>
</dbReference>
<dbReference type="HOGENOM" id="CLU_018272_3_2_4"/>
<dbReference type="OrthoDB" id="9810880at2"/>
<dbReference type="UniPathway" id="UPA00060">
    <property type="reaction ID" value="UER00141"/>
</dbReference>
<dbReference type="Proteomes" id="UP000008332">
    <property type="component" value="Chromosome"/>
</dbReference>
<dbReference type="GO" id="GO:0005737">
    <property type="term" value="C:cytoplasm"/>
    <property type="evidence" value="ECO:0007669"/>
    <property type="project" value="TreeGrafter"/>
</dbReference>
<dbReference type="GO" id="GO:0000287">
    <property type="term" value="F:magnesium ion binding"/>
    <property type="evidence" value="ECO:0007669"/>
    <property type="project" value="UniProtKB-UniRule"/>
</dbReference>
<dbReference type="GO" id="GO:0004789">
    <property type="term" value="F:thiamine-phosphate diphosphorylase activity"/>
    <property type="evidence" value="ECO:0007669"/>
    <property type="project" value="UniProtKB-UniRule"/>
</dbReference>
<dbReference type="GO" id="GO:0009228">
    <property type="term" value="P:thiamine biosynthetic process"/>
    <property type="evidence" value="ECO:0007669"/>
    <property type="project" value="UniProtKB-KW"/>
</dbReference>
<dbReference type="GO" id="GO:0009229">
    <property type="term" value="P:thiamine diphosphate biosynthetic process"/>
    <property type="evidence" value="ECO:0007669"/>
    <property type="project" value="UniProtKB-UniRule"/>
</dbReference>
<dbReference type="CDD" id="cd00564">
    <property type="entry name" value="TMP_TenI"/>
    <property type="match status" value="1"/>
</dbReference>
<dbReference type="FunFam" id="3.20.20.70:FF:000096">
    <property type="entry name" value="Thiamine-phosphate synthase"/>
    <property type="match status" value="1"/>
</dbReference>
<dbReference type="Gene3D" id="3.20.20.70">
    <property type="entry name" value="Aldolase class I"/>
    <property type="match status" value="1"/>
</dbReference>
<dbReference type="HAMAP" id="MF_00097">
    <property type="entry name" value="TMP_synthase"/>
    <property type="match status" value="1"/>
</dbReference>
<dbReference type="InterPro" id="IPR013785">
    <property type="entry name" value="Aldolase_TIM"/>
</dbReference>
<dbReference type="InterPro" id="IPR036206">
    <property type="entry name" value="ThiamineP_synth_sf"/>
</dbReference>
<dbReference type="InterPro" id="IPR022998">
    <property type="entry name" value="ThiamineP_synth_TenI"/>
</dbReference>
<dbReference type="InterPro" id="IPR034291">
    <property type="entry name" value="TMP_synthase"/>
</dbReference>
<dbReference type="NCBIfam" id="TIGR00693">
    <property type="entry name" value="thiE"/>
    <property type="match status" value="1"/>
</dbReference>
<dbReference type="PANTHER" id="PTHR20857">
    <property type="entry name" value="THIAMINE-PHOSPHATE PYROPHOSPHORYLASE"/>
    <property type="match status" value="1"/>
</dbReference>
<dbReference type="PANTHER" id="PTHR20857:SF15">
    <property type="entry name" value="THIAMINE-PHOSPHATE SYNTHASE"/>
    <property type="match status" value="1"/>
</dbReference>
<dbReference type="Pfam" id="PF02581">
    <property type="entry name" value="TMP-TENI"/>
    <property type="match status" value="1"/>
</dbReference>
<dbReference type="SUPFAM" id="SSF51391">
    <property type="entry name" value="Thiamin phosphate synthase"/>
    <property type="match status" value="1"/>
</dbReference>
<evidence type="ECO:0000255" key="1">
    <source>
        <dbReference type="HAMAP-Rule" id="MF_00097"/>
    </source>
</evidence>
<gene>
    <name evidence="1" type="primary">thiE</name>
    <name type="ordered locus">Rfer_2471</name>
</gene>
<accession>Q21VL5</accession>
<name>THIE_ALBFT</name>
<protein>
    <recommendedName>
        <fullName evidence="1">Thiamine-phosphate synthase</fullName>
        <shortName evidence="1">TP synthase</shortName>
        <shortName evidence="1">TPS</shortName>
        <ecNumber evidence="1">2.5.1.3</ecNumber>
    </recommendedName>
    <alternativeName>
        <fullName evidence="1">Thiamine-phosphate pyrophosphorylase</fullName>
        <shortName evidence="1">TMP pyrophosphorylase</shortName>
        <shortName evidence="1">TMP-PPase</shortName>
    </alternativeName>
</protein>
<keyword id="KW-0460">Magnesium</keyword>
<keyword id="KW-0479">Metal-binding</keyword>
<keyword id="KW-1185">Reference proteome</keyword>
<keyword id="KW-0784">Thiamine biosynthesis</keyword>
<keyword id="KW-0808">Transferase</keyword>
<feature type="chain" id="PRO_0000336422" description="Thiamine-phosphate synthase">
    <location>
        <begin position="1"/>
        <end position="219"/>
    </location>
</feature>
<feature type="binding site" evidence="1">
    <location>
        <begin position="48"/>
        <end position="52"/>
    </location>
    <ligand>
        <name>4-amino-2-methyl-5-(diphosphooxymethyl)pyrimidine</name>
        <dbReference type="ChEBI" id="CHEBI:57841"/>
    </ligand>
</feature>
<feature type="binding site" evidence="1">
    <location>
        <position position="80"/>
    </location>
    <ligand>
        <name>4-amino-2-methyl-5-(diphosphooxymethyl)pyrimidine</name>
        <dbReference type="ChEBI" id="CHEBI:57841"/>
    </ligand>
</feature>
<feature type="binding site" evidence="1">
    <location>
        <position position="81"/>
    </location>
    <ligand>
        <name>Mg(2+)</name>
        <dbReference type="ChEBI" id="CHEBI:18420"/>
    </ligand>
</feature>
<feature type="binding site" evidence="1">
    <location>
        <position position="100"/>
    </location>
    <ligand>
        <name>Mg(2+)</name>
        <dbReference type="ChEBI" id="CHEBI:18420"/>
    </ligand>
</feature>
<feature type="binding site" evidence="1">
    <location>
        <position position="119"/>
    </location>
    <ligand>
        <name>4-amino-2-methyl-5-(diphosphooxymethyl)pyrimidine</name>
        <dbReference type="ChEBI" id="CHEBI:57841"/>
    </ligand>
</feature>
<feature type="binding site" evidence="1">
    <location>
        <begin position="145"/>
        <end position="147"/>
    </location>
    <ligand>
        <name>2-[(2R,5Z)-2-carboxy-4-methylthiazol-5(2H)-ylidene]ethyl phosphate</name>
        <dbReference type="ChEBI" id="CHEBI:62899"/>
    </ligand>
</feature>
<feature type="binding site" evidence="1">
    <location>
        <position position="148"/>
    </location>
    <ligand>
        <name>4-amino-2-methyl-5-(diphosphooxymethyl)pyrimidine</name>
        <dbReference type="ChEBI" id="CHEBI:57841"/>
    </ligand>
</feature>
<feature type="binding site" evidence="1">
    <location>
        <position position="176"/>
    </location>
    <ligand>
        <name>2-[(2R,5Z)-2-carboxy-4-methylthiazol-5(2H)-ylidene]ethyl phosphate</name>
        <dbReference type="ChEBI" id="CHEBI:62899"/>
    </ligand>
</feature>
<feature type="binding site" evidence="1">
    <location>
        <begin position="196"/>
        <end position="197"/>
    </location>
    <ligand>
        <name>2-[(2R,5Z)-2-carboxy-4-methylthiazol-5(2H)-ylidene]ethyl phosphate</name>
        <dbReference type="ChEBI" id="CHEBI:62899"/>
    </ligand>
</feature>